<dbReference type="EMBL" id="CP000325">
    <property type="protein sequence ID" value="ABL03444.1"/>
    <property type="molecule type" value="Genomic_DNA"/>
</dbReference>
<dbReference type="RefSeq" id="WP_011739069.1">
    <property type="nucleotide sequence ID" value="NC_008611.1"/>
</dbReference>
<dbReference type="SMR" id="A0PM75"/>
<dbReference type="KEGG" id="mul:MUL_0804"/>
<dbReference type="eggNOG" id="COG0093">
    <property type="taxonomic scope" value="Bacteria"/>
</dbReference>
<dbReference type="HOGENOM" id="CLU_095071_2_1_11"/>
<dbReference type="Proteomes" id="UP000000765">
    <property type="component" value="Chromosome"/>
</dbReference>
<dbReference type="GO" id="GO:0022625">
    <property type="term" value="C:cytosolic large ribosomal subunit"/>
    <property type="evidence" value="ECO:0007669"/>
    <property type="project" value="TreeGrafter"/>
</dbReference>
<dbReference type="GO" id="GO:0070180">
    <property type="term" value="F:large ribosomal subunit rRNA binding"/>
    <property type="evidence" value="ECO:0007669"/>
    <property type="project" value="TreeGrafter"/>
</dbReference>
<dbReference type="GO" id="GO:0003735">
    <property type="term" value="F:structural constituent of ribosome"/>
    <property type="evidence" value="ECO:0007669"/>
    <property type="project" value="InterPro"/>
</dbReference>
<dbReference type="GO" id="GO:0006412">
    <property type="term" value="P:translation"/>
    <property type="evidence" value="ECO:0007669"/>
    <property type="project" value="UniProtKB-UniRule"/>
</dbReference>
<dbReference type="CDD" id="cd00337">
    <property type="entry name" value="Ribosomal_uL14"/>
    <property type="match status" value="1"/>
</dbReference>
<dbReference type="FunFam" id="2.40.150.20:FF:000001">
    <property type="entry name" value="50S ribosomal protein L14"/>
    <property type="match status" value="1"/>
</dbReference>
<dbReference type="Gene3D" id="2.40.150.20">
    <property type="entry name" value="Ribosomal protein L14"/>
    <property type="match status" value="1"/>
</dbReference>
<dbReference type="HAMAP" id="MF_01367">
    <property type="entry name" value="Ribosomal_uL14"/>
    <property type="match status" value="1"/>
</dbReference>
<dbReference type="InterPro" id="IPR000218">
    <property type="entry name" value="Ribosomal_uL14"/>
</dbReference>
<dbReference type="InterPro" id="IPR005745">
    <property type="entry name" value="Ribosomal_uL14_bac-type"/>
</dbReference>
<dbReference type="InterPro" id="IPR019972">
    <property type="entry name" value="Ribosomal_uL14_CS"/>
</dbReference>
<dbReference type="InterPro" id="IPR036853">
    <property type="entry name" value="Ribosomal_uL14_sf"/>
</dbReference>
<dbReference type="NCBIfam" id="TIGR01067">
    <property type="entry name" value="rplN_bact"/>
    <property type="match status" value="1"/>
</dbReference>
<dbReference type="PANTHER" id="PTHR11761">
    <property type="entry name" value="50S/60S RIBOSOMAL PROTEIN L14/L23"/>
    <property type="match status" value="1"/>
</dbReference>
<dbReference type="PANTHER" id="PTHR11761:SF3">
    <property type="entry name" value="LARGE RIBOSOMAL SUBUNIT PROTEIN UL14M"/>
    <property type="match status" value="1"/>
</dbReference>
<dbReference type="Pfam" id="PF00238">
    <property type="entry name" value="Ribosomal_L14"/>
    <property type="match status" value="1"/>
</dbReference>
<dbReference type="SMART" id="SM01374">
    <property type="entry name" value="Ribosomal_L14"/>
    <property type="match status" value="1"/>
</dbReference>
<dbReference type="SUPFAM" id="SSF50193">
    <property type="entry name" value="Ribosomal protein L14"/>
    <property type="match status" value="1"/>
</dbReference>
<dbReference type="PROSITE" id="PS00049">
    <property type="entry name" value="RIBOSOMAL_L14"/>
    <property type="match status" value="1"/>
</dbReference>
<name>RL14_MYCUA</name>
<sequence>MIQQESRLKVADNTGAKEILCIRVLGGSSRRYAGIGDIIVATVKDAIPGGNVKRGDVVKAVVVRTVKERRRPDGSYIKFDENAAVIIKPDNDPRGTRIFGPVGRELREKRFMKLISLAPEVL</sequence>
<gene>
    <name evidence="1" type="primary">rplN</name>
    <name type="ordered locus">MUL_0804</name>
</gene>
<evidence type="ECO:0000255" key="1">
    <source>
        <dbReference type="HAMAP-Rule" id="MF_01367"/>
    </source>
</evidence>
<evidence type="ECO:0000305" key="2"/>
<accession>A0PM75</accession>
<keyword id="KW-0687">Ribonucleoprotein</keyword>
<keyword id="KW-0689">Ribosomal protein</keyword>
<keyword id="KW-0694">RNA-binding</keyword>
<keyword id="KW-0699">rRNA-binding</keyword>
<comment type="function">
    <text evidence="1">Binds to 23S rRNA. Forms part of two intersubunit bridges in the 70S ribosome.</text>
</comment>
<comment type="subunit">
    <text evidence="1">Part of the 50S ribosomal subunit. Forms a cluster with proteins L3 and L19. In the 70S ribosome, L14 and L19 interact and together make contacts with the 16S rRNA in bridges B5 and B8.</text>
</comment>
<comment type="similarity">
    <text evidence="1">Belongs to the universal ribosomal protein uL14 family.</text>
</comment>
<reference key="1">
    <citation type="journal article" date="2007" name="Genome Res.">
        <title>Reductive evolution and niche adaptation inferred from the genome of Mycobacterium ulcerans, the causative agent of Buruli ulcer.</title>
        <authorList>
            <person name="Stinear T.P."/>
            <person name="Seemann T."/>
            <person name="Pidot S."/>
            <person name="Frigui W."/>
            <person name="Reysset G."/>
            <person name="Garnier T."/>
            <person name="Meurice G."/>
            <person name="Simon D."/>
            <person name="Bouchier C."/>
            <person name="Ma L."/>
            <person name="Tichit M."/>
            <person name="Porter J.L."/>
            <person name="Ryan J."/>
            <person name="Johnson P.D.R."/>
            <person name="Davies J.K."/>
            <person name="Jenkin G.A."/>
            <person name="Small P.L.C."/>
            <person name="Jones L.M."/>
            <person name="Tekaia F."/>
            <person name="Laval F."/>
            <person name="Daffe M."/>
            <person name="Parkhill J."/>
            <person name="Cole S.T."/>
        </authorList>
    </citation>
    <scope>NUCLEOTIDE SEQUENCE [LARGE SCALE GENOMIC DNA]</scope>
    <source>
        <strain>Agy99</strain>
    </source>
</reference>
<organism>
    <name type="scientific">Mycobacterium ulcerans (strain Agy99)</name>
    <dbReference type="NCBI Taxonomy" id="362242"/>
    <lineage>
        <taxon>Bacteria</taxon>
        <taxon>Bacillati</taxon>
        <taxon>Actinomycetota</taxon>
        <taxon>Actinomycetes</taxon>
        <taxon>Mycobacteriales</taxon>
        <taxon>Mycobacteriaceae</taxon>
        <taxon>Mycobacterium</taxon>
        <taxon>Mycobacterium ulcerans group</taxon>
    </lineage>
</organism>
<protein>
    <recommendedName>
        <fullName evidence="1">Large ribosomal subunit protein uL14</fullName>
    </recommendedName>
    <alternativeName>
        <fullName evidence="2">50S ribosomal protein L14</fullName>
    </alternativeName>
</protein>
<proteinExistence type="inferred from homology"/>
<feature type="chain" id="PRO_1000055646" description="Large ribosomal subunit protein uL14">
    <location>
        <begin position="1"/>
        <end position="122"/>
    </location>
</feature>